<evidence type="ECO:0000255" key="1">
    <source>
        <dbReference type="HAMAP-Rule" id="MF_00044"/>
    </source>
</evidence>
<name>SYD_VIBCH</name>
<protein>
    <recommendedName>
        <fullName evidence="1">Aspartate--tRNA ligase</fullName>
        <ecNumber evidence="1">6.1.1.12</ecNumber>
    </recommendedName>
    <alternativeName>
        <fullName evidence="1">Aspartyl-tRNA synthetase</fullName>
        <shortName evidence="1">AspRS</shortName>
    </alternativeName>
</protein>
<accession>Q9KSU0</accession>
<sequence>MRSHYCGHLNKSLVGQTVELCGWVNRRRDLGGLIFIDMRDREGIVQVVVDPDMADVFAVANQLRSEFCIKLTGEVRARPESQVNKEMATGEVELLARSLEIINRSDVLPLDFNQKNSEEQRLKYRYLDLRRPEMSDRIKLRAKASSFVRRFLDTHGFLDIETPVLTKATPEGARDYLVPSRVHKGSFYALPQSPQLFKQLLMMSGFDRYYQIVKCFRDEDLRADRQPEFTQIDIETSFMTAEQVRAVTEKMIREMWLELLNVDLGDFPIMPYSEAMRRFGSDKPDLRNPMELVDVADLLKDVDFKVFSGPANDPKGRVAALCIPGGAALTRKQIDEYTAFVAIYGAKGLAWLKVNDLAAGMEGIQSPVAKFLTEEIIQAIIERTQAQTGDIILFGADSAKVVAEALGALRLKAGKELGITNESAWAPLWVVDFPMFESDDEGNVAAMHHPFTSPLNLSPEQLKANPEEALSNAYDMVLNGYEVGGGSVRIHNAEMQSAVFDILGITPEEQRLKFGFLLDALKFGTPPHAGLAFGLDRLVMLLCGTENIRDVIAFPKTTAAACLMTDAPSLANPAALEELAIAVKLATKDKA</sequence>
<keyword id="KW-0030">Aminoacyl-tRNA synthetase</keyword>
<keyword id="KW-0067">ATP-binding</keyword>
<keyword id="KW-0963">Cytoplasm</keyword>
<keyword id="KW-0436">Ligase</keyword>
<keyword id="KW-0547">Nucleotide-binding</keyword>
<keyword id="KW-0648">Protein biosynthesis</keyword>
<keyword id="KW-1185">Reference proteome</keyword>
<organism>
    <name type="scientific">Vibrio cholerae serotype O1 (strain ATCC 39315 / El Tor Inaba N16961)</name>
    <dbReference type="NCBI Taxonomy" id="243277"/>
    <lineage>
        <taxon>Bacteria</taxon>
        <taxon>Pseudomonadati</taxon>
        <taxon>Pseudomonadota</taxon>
        <taxon>Gammaproteobacteria</taxon>
        <taxon>Vibrionales</taxon>
        <taxon>Vibrionaceae</taxon>
        <taxon>Vibrio</taxon>
    </lineage>
</organism>
<feature type="chain" id="PRO_0000110976" description="Aspartate--tRNA ligase">
    <location>
        <begin position="1"/>
        <end position="591"/>
    </location>
</feature>
<feature type="region of interest" description="Aspartate" evidence="1">
    <location>
        <begin position="195"/>
        <end position="198"/>
    </location>
</feature>
<feature type="binding site" evidence="1">
    <location>
        <position position="171"/>
    </location>
    <ligand>
        <name>L-aspartate</name>
        <dbReference type="ChEBI" id="CHEBI:29991"/>
    </ligand>
</feature>
<feature type="binding site" evidence="1">
    <location>
        <begin position="217"/>
        <end position="219"/>
    </location>
    <ligand>
        <name>ATP</name>
        <dbReference type="ChEBI" id="CHEBI:30616"/>
    </ligand>
</feature>
<feature type="binding site" evidence="1">
    <location>
        <position position="217"/>
    </location>
    <ligand>
        <name>L-aspartate</name>
        <dbReference type="ChEBI" id="CHEBI:29991"/>
    </ligand>
</feature>
<feature type="binding site" evidence="1">
    <location>
        <position position="226"/>
    </location>
    <ligand>
        <name>ATP</name>
        <dbReference type="ChEBI" id="CHEBI:30616"/>
    </ligand>
</feature>
<feature type="binding site" evidence="1">
    <location>
        <position position="448"/>
    </location>
    <ligand>
        <name>L-aspartate</name>
        <dbReference type="ChEBI" id="CHEBI:29991"/>
    </ligand>
</feature>
<feature type="binding site" evidence="1">
    <location>
        <position position="482"/>
    </location>
    <ligand>
        <name>ATP</name>
        <dbReference type="ChEBI" id="CHEBI:30616"/>
    </ligand>
</feature>
<feature type="binding site" evidence="1">
    <location>
        <position position="489"/>
    </location>
    <ligand>
        <name>L-aspartate</name>
        <dbReference type="ChEBI" id="CHEBI:29991"/>
    </ligand>
</feature>
<feature type="binding site" evidence="1">
    <location>
        <begin position="534"/>
        <end position="537"/>
    </location>
    <ligand>
        <name>ATP</name>
        <dbReference type="ChEBI" id="CHEBI:30616"/>
    </ligand>
</feature>
<comment type="function">
    <text evidence="1">Catalyzes the attachment of L-aspartate to tRNA(Asp) in a two-step reaction: L-aspartate is first activated by ATP to form Asp-AMP and then transferred to the acceptor end of tRNA(Asp).</text>
</comment>
<comment type="catalytic activity">
    <reaction evidence="1">
        <text>tRNA(Asp) + L-aspartate + ATP = L-aspartyl-tRNA(Asp) + AMP + diphosphate</text>
        <dbReference type="Rhea" id="RHEA:19649"/>
        <dbReference type="Rhea" id="RHEA-COMP:9660"/>
        <dbReference type="Rhea" id="RHEA-COMP:9678"/>
        <dbReference type="ChEBI" id="CHEBI:29991"/>
        <dbReference type="ChEBI" id="CHEBI:30616"/>
        <dbReference type="ChEBI" id="CHEBI:33019"/>
        <dbReference type="ChEBI" id="CHEBI:78442"/>
        <dbReference type="ChEBI" id="CHEBI:78516"/>
        <dbReference type="ChEBI" id="CHEBI:456215"/>
        <dbReference type="EC" id="6.1.1.12"/>
    </reaction>
</comment>
<comment type="subunit">
    <text evidence="1">Homodimer.</text>
</comment>
<comment type="subcellular location">
    <subcellularLocation>
        <location evidence="1">Cytoplasm</location>
    </subcellularLocation>
</comment>
<comment type="similarity">
    <text evidence="1">Belongs to the class-II aminoacyl-tRNA synthetase family. Type 1 subfamily.</text>
</comment>
<proteinExistence type="inferred from homology"/>
<gene>
    <name evidence="1" type="primary">aspS</name>
    <name type="ordered locus">VC_1166</name>
</gene>
<reference key="1">
    <citation type="journal article" date="2000" name="Nature">
        <title>DNA sequence of both chromosomes of the cholera pathogen Vibrio cholerae.</title>
        <authorList>
            <person name="Heidelberg J.F."/>
            <person name="Eisen J.A."/>
            <person name="Nelson W.C."/>
            <person name="Clayton R.A."/>
            <person name="Gwinn M.L."/>
            <person name="Dodson R.J."/>
            <person name="Haft D.H."/>
            <person name="Hickey E.K."/>
            <person name="Peterson J.D."/>
            <person name="Umayam L.A."/>
            <person name="Gill S.R."/>
            <person name="Nelson K.E."/>
            <person name="Read T.D."/>
            <person name="Tettelin H."/>
            <person name="Richardson D.L."/>
            <person name="Ermolaeva M.D."/>
            <person name="Vamathevan J.J."/>
            <person name="Bass S."/>
            <person name="Qin H."/>
            <person name="Dragoi I."/>
            <person name="Sellers P."/>
            <person name="McDonald L.A."/>
            <person name="Utterback T.R."/>
            <person name="Fleischmann R.D."/>
            <person name="Nierman W.C."/>
            <person name="White O."/>
            <person name="Salzberg S.L."/>
            <person name="Smith H.O."/>
            <person name="Colwell R.R."/>
            <person name="Mekalanos J.J."/>
            <person name="Venter J.C."/>
            <person name="Fraser C.M."/>
        </authorList>
    </citation>
    <scope>NUCLEOTIDE SEQUENCE [LARGE SCALE GENOMIC DNA]</scope>
    <source>
        <strain>ATCC 39315 / El Tor Inaba N16961</strain>
    </source>
</reference>
<dbReference type="EC" id="6.1.1.12" evidence="1"/>
<dbReference type="EMBL" id="AE003852">
    <property type="protein sequence ID" value="AAF94325.1"/>
    <property type="molecule type" value="Genomic_DNA"/>
</dbReference>
<dbReference type="PIR" id="F82234">
    <property type="entry name" value="F82234"/>
</dbReference>
<dbReference type="RefSeq" id="NP_230811.1">
    <property type="nucleotide sequence ID" value="NC_002505.1"/>
</dbReference>
<dbReference type="RefSeq" id="WP_001256500.1">
    <property type="nucleotide sequence ID" value="NZ_LT906614.1"/>
</dbReference>
<dbReference type="SMR" id="Q9KSU0"/>
<dbReference type="STRING" id="243277.VC_1166"/>
<dbReference type="DNASU" id="2614599"/>
<dbReference type="EnsemblBacteria" id="AAF94325">
    <property type="protein sequence ID" value="AAF94325"/>
    <property type="gene ID" value="VC_1166"/>
</dbReference>
<dbReference type="KEGG" id="vch:VC_1166"/>
<dbReference type="PATRIC" id="fig|243277.26.peg.1115"/>
<dbReference type="eggNOG" id="COG0173">
    <property type="taxonomic scope" value="Bacteria"/>
</dbReference>
<dbReference type="HOGENOM" id="CLU_014330_3_2_6"/>
<dbReference type="Proteomes" id="UP000000584">
    <property type="component" value="Chromosome 1"/>
</dbReference>
<dbReference type="GO" id="GO:0005737">
    <property type="term" value="C:cytoplasm"/>
    <property type="evidence" value="ECO:0007669"/>
    <property type="project" value="UniProtKB-SubCell"/>
</dbReference>
<dbReference type="GO" id="GO:0004815">
    <property type="term" value="F:aspartate-tRNA ligase activity"/>
    <property type="evidence" value="ECO:0000318"/>
    <property type="project" value="GO_Central"/>
</dbReference>
<dbReference type="GO" id="GO:0005524">
    <property type="term" value="F:ATP binding"/>
    <property type="evidence" value="ECO:0007669"/>
    <property type="project" value="UniProtKB-UniRule"/>
</dbReference>
<dbReference type="GO" id="GO:0003676">
    <property type="term" value="F:nucleic acid binding"/>
    <property type="evidence" value="ECO:0007669"/>
    <property type="project" value="InterPro"/>
</dbReference>
<dbReference type="GO" id="GO:0006422">
    <property type="term" value="P:aspartyl-tRNA aminoacylation"/>
    <property type="evidence" value="ECO:0000318"/>
    <property type="project" value="GO_Central"/>
</dbReference>
<dbReference type="CDD" id="cd00777">
    <property type="entry name" value="AspRS_core"/>
    <property type="match status" value="1"/>
</dbReference>
<dbReference type="CDD" id="cd04317">
    <property type="entry name" value="EcAspRS_like_N"/>
    <property type="match status" value="1"/>
</dbReference>
<dbReference type="FunFam" id="2.40.50.140:FF:000080">
    <property type="entry name" value="Aspartate--tRNA ligase"/>
    <property type="match status" value="1"/>
</dbReference>
<dbReference type="Gene3D" id="3.30.930.10">
    <property type="entry name" value="Bira Bifunctional Protein, Domain 2"/>
    <property type="match status" value="1"/>
</dbReference>
<dbReference type="Gene3D" id="3.30.1360.30">
    <property type="entry name" value="GAD-like domain"/>
    <property type="match status" value="1"/>
</dbReference>
<dbReference type="Gene3D" id="2.40.50.140">
    <property type="entry name" value="Nucleic acid-binding proteins"/>
    <property type="match status" value="1"/>
</dbReference>
<dbReference type="HAMAP" id="MF_00044">
    <property type="entry name" value="Asp_tRNA_synth_type1"/>
    <property type="match status" value="1"/>
</dbReference>
<dbReference type="InterPro" id="IPR004364">
    <property type="entry name" value="Aa-tRNA-synt_II"/>
</dbReference>
<dbReference type="InterPro" id="IPR006195">
    <property type="entry name" value="aa-tRNA-synth_II"/>
</dbReference>
<dbReference type="InterPro" id="IPR045864">
    <property type="entry name" value="aa-tRNA-synth_II/BPL/LPL"/>
</dbReference>
<dbReference type="InterPro" id="IPR004524">
    <property type="entry name" value="Asp-tRNA-ligase_1"/>
</dbReference>
<dbReference type="InterPro" id="IPR047089">
    <property type="entry name" value="Asp-tRNA-ligase_1_N"/>
</dbReference>
<dbReference type="InterPro" id="IPR002312">
    <property type="entry name" value="Asp/Asn-tRNA-synth_IIb"/>
</dbReference>
<dbReference type="InterPro" id="IPR047090">
    <property type="entry name" value="AspRS_core"/>
</dbReference>
<dbReference type="InterPro" id="IPR004115">
    <property type="entry name" value="GAD-like_sf"/>
</dbReference>
<dbReference type="InterPro" id="IPR029351">
    <property type="entry name" value="GAD_dom"/>
</dbReference>
<dbReference type="InterPro" id="IPR012340">
    <property type="entry name" value="NA-bd_OB-fold"/>
</dbReference>
<dbReference type="InterPro" id="IPR004365">
    <property type="entry name" value="NA-bd_OB_tRNA"/>
</dbReference>
<dbReference type="NCBIfam" id="TIGR00459">
    <property type="entry name" value="aspS_bact"/>
    <property type="match status" value="1"/>
</dbReference>
<dbReference type="NCBIfam" id="NF001750">
    <property type="entry name" value="PRK00476.1"/>
    <property type="match status" value="1"/>
</dbReference>
<dbReference type="PANTHER" id="PTHR22594:SF5">
    <property type="entry name" value="ASPARTATE--TRNA LIGASE, MITOCHONDRIAL"/>
    <property type="match status" value="1"/>
</dbReference>
<dbReference type="PANTHER" id="PTHR22594">
    <property type="entry name" value="ASPARTYL/LYSYL-TRNA SYNTHETASE"/>
    <property type="match status" value="1"/>
</dbReference>
<dbReference type="Pfam" id="PF02938">
    <property type="entry name" value="GAD"/>
    <property type="match status" value="1"/>
</dbReference>
<dbReference type="Pfam" id="PF00152">
    <property type="entry name" value="tRNA-synt_2"/>
    <property type="match status" value="1"/>
</dbReference>
<dbReference type="Pfam" id="PF01336">
    <property type="entry name" value="tRNA_anti-codon"/>
    <property type="match status" value="1"/>
</dbReference>
<dbReference type="PRINTS" id="PR01042">
    <property type="entry name" value="TRNASYNTHASP"/>
</dbReference>
<dbReference type="SUPFAM" id="SSF55681">
    <property type="entry name" value="Class II aaRS and biotin synthetases"/>
    <property type="match status" value="1"/>
</dbReference>
<dbReference type="SUPFAM" id="SSF55261">
    <property type="entry name" value="GAD domain-like"/>
    <property type="match status" value="1"/>
</dbReference>
<dbReference type="SUPFAM" id="SSF50249">
    <property type="entry name" value="Nucleic acid-binding proteins"/>
    <property type="match status" value="1"/>
</dbReference>
<dbReference type="PROSITE" id="PS50862">
    <property type="entry name" value="AA_TRNA_LIGASE_II"/>
    <property type="match status" value="1"/>
</dbReference>